<reference key="1">
    <citation type="submission" date="2009-03" db="EMBL/GenBank/DDBJ databases">
        <title>Complete genome sequence of Edwardsiella ictaluri 93-146.</title>
        <authorList>
            <person name="Williams M.L."/>
            <person name="Gillaspy A.F."/>
            <person name="Dyer D.W."/>
            <person name="Thune R.L."/>
            <person name="Waldbieser G.C."/>
            <person name="Schuster S.C."/>
            <person name="Gipson J."/>
            <person name="Zaitshik J."/>
            <person name="Landry C."/>
            <person name="Lawrence M.L."/>
        </authorList>
    </citation>
    <scope>NUCLEOTIDE SEQUENCE [LARGE SCALE GENOMIC DNA]</scope>
    <source>
        <strain>93-146</strain>
    </source>
</reference>
<accession>C5BCS0</accession>
<organism>
    <name type="scientific">Edwardsiella ictaluri (strain 93-146)</name>
    <dbReference type="NCBI Taxonomy" id="634503"/>
    <lineage>
        <taxon>Bacteria</taxon>
        <taxon>Pseudomonadati</taxon>
        <taxon>Pseudomonadota</taxon>
        <taxon>Gammaproteobacteria</taxon>
        <taxon>Enterobacterales</taxon>
        <taxon>Hafniaceae</taxon>
        <taxon>Edwardsiella</taxon>
    </lineage>
</organism>
<sequence length="140" mass="15583">MNPRTILAFDFGTRSIGCAIGQELTGSARPLQSFKANDGVPDWQQIEKVLREWQPDLVVVGLPLNMDGSEQPLTQQARKFANRLHGRFGVQIALQDERLSTVEARAHLFAGGGYRALEKGRVDAASAALILESWFENQYR</sequence>
<evidence type="ECO:0000255" key="1">
    <source>
        <dbReference type="HAMAP-Rule" id="MF_00651"/>
    </source>
</evidence>
<comment type="function">
    <text evidence="1">Could be a nuclease involved in processing of the 5'-end of pre-16S rRNA.</text>
</comment>
<comment type="subcellular location">
    <subcellularLocation>
        <location evidence="1">Cytoplasm</location>
    </subcellularLocation>
</comment>
<comment type="similarity">
    <text evidence="1">Belongs to the YqgF nuclease family.</text>
</comment>
<name>YQGF_EDWI9</name>
<keyword id="KW-0963">Cytoplasm</keyword>
<keyword id="KW-0378">Hydrolase</keyword>
<keyword id="KW-0540">Nuclease</keyword>
<keyword id="KW-0690">Ribosome biogenesis</keyword>
<feature type="chain" id="PRO_1000212410" description="Putative pre-16S rRNA nuclease">
    <location>
        <begin position="1"/>
        <end position="140"/>
    </location>
</feature>
<protein>
    <recommendedName>
        <fullName evidence="1">Putative pre-16S rRNA nuclease</fullName>
        <ecNumber evidence="1">3.1.-.-</ecNumber>
    </recommendedName>
</protein>
<gene>
    <name evidence="1" type="primary">yqgF</name>
    <name type="ordered locus">NT01EI_0284</name>
</gene>
<proteinExistence type="inferred from homology"/>
<dbReference type="EC" id="3.1.-.-" evidence="1"/>
<dbReference type="EMBL" id="CP001600">
    <property type="protein sequence ID" value="ACR67526.1"/>
    <property type="molecule type" value="Genomic_DNA"/>
</dbReference>
<dbReference type="SMR" id="C5BCS0"/>
<dbReference type="STRING" id="67780.B6E78_12520"/>
<dbReference type="KEGG" id="eic:NT01EI_0284"/>
<dbReference type="PATRIC" id="fig|634503.3.peg.256"/>
<dbReference type="HOGENOM" id="CLU_098240_3_0_6"/>
<dbReference type="OrthoDB" id="9796140at2"/>
<dbReference type="Proteomes" id="UP000001485">
    <property type="component" value="Chromosome"/>
</dbReference>
<dbReference type="GO" id="GO:0005829">
    <property type="term" value="C:cytosol"/>
    <property type="evidence" value="ECO:0007669"/>
    <property type="project" value="TreeGrafter"/>
</dbReference>
<dbReference type="GO" id="GO:0004518">
    <property type="term" value="F:nuclease activity"/>
    <property type="evidence" value="ECO:0007669"/>
    <property type="project" value="UniProtKB-KW"/>
</dbReference>
<dbReference type="GO" id="GO:0000967">
    <property type="term" value="P:rRNA 5'-end processing"/>
    <property type="evidence" value="ECO:0007669"/>
    <property type="project" value="UniProtKB-UniRule"/>
</dbReference>
<dbReference type="CDD" id="cd16964">
    <property type="entry name" value="YqgF"/>
    <property type="match status" value="1"/>
</dbReference>
<dbReference type="FunFam" id="3.30.420.140:FF:000002">
    <property type="entry name" value="Putative pre-16S rRNA nuclease"/>
    <property type="match status" value="1"/>
</dbReference>
<dbReference type="Gene3D" id="3.30.420.140">
    <property type="entry name" value="YqgF/RNase H-like domain"/>
    <property type="match status" value="1"/>
</dbReference>
<dbReference type="HAMAP" id="MF_00651">
    <property type="entry name" value="Nuclease_YqgF"/>
    <property type="match status" value="1"/>
</dbReference>
<dbReference type="InterPro" id="IPR012337">
    <property type="entry name" value="RNaseH-like_sf"/>
</dbReference>
<dbReference type="InterPro" id="IPR005227">
    <property type="entry name" value="YqgF"/>
</dbReference>
<dbReference type="InterPro" id="IPR006641">
    <property type="entry name" value="YqgF/RNaseH-like_dom"/>
</dbReference>
<dbReference type="InterPro" id="IPR037027">
    <property type="entry name" value="YqgF/RNaseH-like_dom_sf"/>
</dbReference>
<dbReference type="NCBIfam" id="TIGR00250">
    <property type="entry name" value="RNAse_H_YqgF"/>
    <property type="match status" value="1"/>
</dbReference>
<dbReference type="PANTHER" id="PTHR33317">
    <property type="entry name" value="POLYNUCLEOTIDYL TRANSFERASE, RIBONUCLEASE H-LIKE SUPERFAMILY PROTEIN"/>
    <property type="match status" value="1"/>
</dbReference>
<dbReference type="PANTHER" id="PTHR33317:SF4">
    <property type="entry name" value="POLYNUCLEOTIDYL TRANSFERASE, RIBONUCLEASE H-LIKE SUPERFAMILY PROTEIN"/>
    <property type="match status" value="1"/>
</dbReference>
<dbReference type="Pfam" id="PF03652">
    <property type="entry name" value="RuvX"/>
    <property type="match status" value="1"/>
</dbReference>
<dbReference type="SMART" id="SM00732">
    <property type="entry name" value="YqgFc"/>
    <property type="match status" value="1"/>
</dbReference>
<dbReference type="SUPFAM" id="SSF53098">
    <property type="entry name" value="Ribonuclease H-like"/>
    <property type="match status" value="1"/>
</dbReference>